<dbReference type="EC" id="4.2.1.121" evidence="2"/>
<dbReference type="EC" id="4.2.1.183" evidence="2 3 4 5"/>
<dbReference type="EMBL" id="AJ867809">
    <property type="protein sequence ID" value="CAI30435.1"/>
    <property type="molecule type" value="mRNA"/>
</dbReference>
<dbReference type="KEGG" id="ag:CAI30435"/>
<dbReference type="BioCyc" id="MetaCyc:MONOMER-12737"/>
<dbReference type="BRENDA" id="4.2.1.B9">
    <property type="organism ID" value="252"/>
</dbReference>
<dbReference type="UniPathway" id="UPA00382"/>
<dbReference type="GO" id="GO:0020037">
    <property type="term" value="F:heme binding"/>
    <property type="evidence" value="ECO:0007669"/>
    <property type="project" value="InterPro"/>
</dbReference>
<dbReference type="GO" id="GO:0016836">
    <property type="term" value="F:hydro-lyase activity"/>
    <property type="evidence" value="ECO:0000314"/>
    <property type="project" value="UniProtKB"/>
</dbReference>
<dbReference type="GO" id="GO:0005506">
    <property type="term" value="F:iron ion binding"/>
    <property type="evidence" value="ECO:0007669"/>
    <property type="project" value="InterPro"/>
</dbReference>
<dbReference type="GO" id="GO:0004497">
    <property type="term" value="F:monooxygenase activity"/>
    <property type="evidence" value="ECO:0007669"/>
    <property type="project" value="InterPro"/>
</dbReference>
<dbReference type="GO" id="GO:0016705">
    <property type="term" value="F:oxidoreductase activity, acting on paired donors, with incorporation or reduction of molecular oxygen"/>
    <property type="evidence" value="ECO:0007669"/>
    <property type="project" value="InterPro"/>
</dbReference>
<dbReference type="GO" id="GO:0031408">
    <property type="term" value="P:oxylipin biosynthetic process"/>
    <property type="evidence" value="ECO:0000314"/>
    <property type="project" value="UniProtKB"/>
</dbReference>
<dbReference type="GO" id="GO:0016125">
    <property type="term" value="P:sterol metabolic process"/>
    <property type="evidence" value="ECO:0007669"/>
    <property type="project" value="TreeGrafter"/>
</dbReference>
<dbReference type="CDD" id="cd11071">
    <property type="entry name" value="CYP74"/>
    <property type="match status" value="1"/>
</dbReference>
<dbReference type="FunFam" id="1.10.630.10:FF:000024">
    <property type="entry name" value="Allene oxide synthase, chloroplastic"/>
    <property type="match status" value="1"/>
</dbReference>
<dbReference type="Gene3D" id="1.10.630.10">
    <property type="entry name" value="Cytochrome P450"/>
    <property type="match status" value="1"/>
</dbReference>
<dbReference type="InterPro" id="IPR001128">
    <property type="entry name" value="Cyt_P450"/>
</dbReference>
<dbReference type="InterPro" id="IPR002403">
    <property type="entry name" value="Cyt_P450_E_grp-IV"/>
</dbReference>
<dbReference type="InterPro" id="IPR036396">
    <property type="entry name" value="Cyt_P450_sf"/>
</dbReference>
<dbReference type="PANTHER" id="PTHR24286:SF302">
    <property type="entry name" value="ALLENE OXIDE SYNTHASE 2"/>
    <property type="match status" value="1"/>
</dbReference>
<dbReference type="PANTHER" id="PTHR24286">
    <property type="entry name" value="CYTOCHROME P450 26"/>
    <property type="match status" value="1"/>
</dbReference>
<dbReference type="Pfam" id="PF00067">
    <property type="entry name" value="p450"/>
    <property type="match status" value="1"/>
</dbReference>
<dbReference type="PRINTS" id="PR00465">
    <property type="entry name" value="EP450IV"/>
</dbReference>
<dbReference type="SUPFAM" id="SSF48264">
    <property type="entry name" value="Cytochrome P450"/>
    <property type="match status" value="1"/>
</dbReference>
<comment type="function">
    <text evidence="2 3 4 5">Divinyl ether synthase involved in oxylipin biosynthesis (PubMed:18326559, PubMed:7672118, PubMed:8690066, PubMed:9128734). Catalyzes the conversion of (13S)-hydroperoxy-(9Z,11E)-octadecadienoate (13-HPOD) to etheroleate and (13S)-hydroperoxy-(9Z,11E,15Z)-octadecatrienoate (13-HPOT) to etherolenate (PubMed:18326559, PubMed:7672118, PubMed:8690066, PubMed:9128734). Catalyzes the conversion of (9S)-hydroperoxy-(10E,12Z)-octadecadienoate (9-HPOD) to colneleate and (9S)-hydroperoxy-(10E,12Z,15Z)-octadecatrienoate (9-HPOT) colnelenate (PubMed:18326559).</text>
</comment>
<comment type="catalytic activity">
    <reaction evidence="2 3 4 5">
        <text>(13S)-hydroperoxy-(9Z,11E)-octadecadienoate = etheroleate + H2O</text>
        <dbReference type="Rhea" id="RHEA:79275"/>
        <dbReference type="ChEBI" id="CHEBI:15377"/>
        <dbReference type="ChEBI" id="CHEBI:57466"/>
        <dbReference type="ChEBI" id="CHEBI:229759"/>
        <dbReference type="EC" id="4.2.1.183"/>
    </reaction>
    <physiologicalReaction direction="left-to-right" evidence="2">
        <dbReference type="Rhea" id="RHEA:79276"/>
    </physiologicalReaction>
</comment>
<comment type="catalytic activity">
    <reaction evidence="2 3 4 5">
        <text>(13S)-hydroperoxy-(9Z,11E,15Z)-octadecatrienoate = etherolenate + H2O</text>
        <dbReference type="Rhea" id="RHEA:79271"/>
        <dbReference type="ChEBI" id="CHEBI:15377"/>
        <dbReference type="ChEBI" id="CHEBI:58757"/>
        <dbReference type="ChEBI" id="CHEBI:229758"/>
        <dbReference type="EC" id="4.2.1.183"/>
    </reaction>
    <physiologicalReaction direction="left-to-right" evidence="2">
        <dbReference type="Rhea" id="RHEA:79272"/>
    </physiologicalReaction>
</comment>
<comment type="catalytic activity">
    <reaction evidence="2">
        <text>(9S)-hydroperoxy-(10E,12Z)-octadecadienoate = colneleate + H2O</text>
        <dbReference type="Rhea" id="RHEA:28174"/>
        <dbReference type="ChEBI" id="CHEBI:15377"/>
        <dbReference type="ChEBI" id="CHEBI:60955"/>
        <dbReference type="ChEBI" id="CHEBI:60957"/>
        <dbReference type="EC" id="4.2.1.121"/>
    </reaction>
    <physiologicalReaction direction="left-to-right" evidence="2">
        <dbReference type="Rhea" id="RHEA:28175"/>
    </physiologicalReaction>
</comment>
<comment type="catalytic activity">
    <reaction evidence="2">
        <text>(9S)-hydroperoxy-(10E,12Z,15Z)-octadecatrienoate = colnelenate + H2O</text>
        <dbReference type="Rhea" id="RHEA:28178"/>
        <dbReference type="ChEBI" id="CHEBI:15377"/>
        <dbReference type="ChEBI" id="CHEBI:60960"/>
        <dbReference type="ChEBI" id="CHEBI:60962"/>
        <dbReference type="EC" id="4.2.1.121"/>
    </reaction>
    <physiologicalReaction direction="left-to-right" evidence="2">
        <dbReference type="Rhea" id="RHEA:28179"/>
    </physiologicalReaction>
</comment>
<comment type="cofactor">
    <cofactor evidence="1">
        <name>heme</name>
        <dbReference type="ChEBI" id="CHEBI:30413"/>
    </cofactor>
</comment>
<comment type="biophysicochemical properties">
    <kinetics>
        <KM evidence="2">100 uM for (13S)-hydroperoxy-(9Z,11E)-octadecadienoate</KM>
        <KM evidence="2">10 uM for (13S)-hydroperoxy-(9Z,11E,15Z)-octadecatrienoate</KM>
        <KM evidence="2">30 uM for (9S)-hydroperoxy-(10E,12Z)-octadecadienoate</KM>
        <KM evidence="2">20 uM for (9S)-hydroperoxy-(10E,12Z,15Z)-octadecatrienoate</KM>
        <text evidence="2">kcat is 550 sec(-1) with (13S)-hydroperoxy-(9Z,11E)-octadecadienoate as substrate (PubMed:18326559). kcat is 40 sec(-1) with (13S)-hydroperoxy-(9Z,11E,15Z)-octadecatrienoate as substrate (PubMed:18326559). kcat is 70 sec (-1) with (9S)-hydroperoxy-(10E,12Z)-octadecadienoate as substrate (PubMed:18326559). kcat is 10 sec (-1) with (9S)-hydroperoxy-(10E,12Z,15Z)-octadecatrienoate as substrate (PubMed:18326559).</text>
    </kinetics>
</comment>
<comment type="pathway">
    <text evidence="2 3 4 5">Lipid metabolism; oxylipin biosynthesis.</text>
</comment>
<comment type="tissue specificity">
    <text evidence="2">Expressed mainly in bulbs, and at lower levels in roots.</text>
</comment>
<comment type="induction">
    <text evidence="2">Induced by treatment with salicylic acid (SA) and osmotic stress.</text>
</comment>
<comment type="similarity">
    <text evidence="7">Belongs to the cytochrome P450 family.</text>
</comment>
<name>CP74_ALLSA</name>
<sequence length="472" mass="52842">MSTSNGSTENIQKPLRKIPDITGTPILTAIKDRLDFFYNQGQYEYFQSRVKKNNSTILRMNMIPGPFASNPKIVALCDAASFPTLFDPSKVSKVNSLTGNYMPALSFTGGYRVCAYLDPSEPTHTKIKQVFFNAQAAKKDTFIPTFVSTFNSMFDKMDAEVESKKKAEFTKFNEAAVFEFVGLALVGPKPAREVFDSAKKSVFFQFHPFITAGLPALVEELAFHMFPFPSFVAKSSYKILYEYFSTGGSWILDNAEEIGLSREEAIHHLIFTWAINAYLGIRTCLMRLFKWIVASGPDLQEKLAREVRSVVRSEEGKITFAGIEKMELVKSVAYESFRFDPPVQVQYGTAKSDLIIESHDGKYQVKKGEMLCGFQPMATRDPKVFDRADEFVPDRFMGDGKKLVKHVLWANGYGTDAPKADDKICAGKDLGVLVGRLLIAVMFLRYDKIGGVVGKTMEEVDVIVNELTKVAV</sequence>
<reference key="1">
    <citation type="journal article" date="2008" name="J. Exp. Bot.">
        <title>Divinyl ether synthesis in garlic bulbs.</title>
        <authorList>
            <person name="Stumpe M."/>
            <person name="Carsjens J.G."/>
            <person name="Goebel C."/>
            <person name="Feussner I."/>
        </authorList>
    </citation>
    <scope>NUCLEOTIDE SEQUENCE [MRNA]</scope>
    <scope>FUNCTION</scope>
    <scope>CATALYTIC ACTIVITY</scope>
    <scope>BIOPHYSICOCHEMICAL PROPERTIES</scope>
    <scope>PATHWAY</scope>
    <scope>TISSUE SPECIFICITY</scope>
    <scope>INDUCTION</scope>
</reference>
<reference key="2">
    <citation type="journal article" date="1995" name="FEBS Lett.">
        <title>The lipoxygenase pathway in garlic (Allium sativum L.) bulbs: detection of the novel divinyl ether oxylipins.</title>
        <authorList>
            <person name="Grechkin A.N."/>
            <person name="Fazliev F.N."/>
            <person name="Mukhtarova L.S."/>
        </authorList>
    </citation>
    <scope>FUNCTION</scope>
    <scope>CATALYTIC ACTIVITY</scope>
    <scope>PATHWAY</scope>
</reference>
<reference key="3">
    <citation type="journal article" date="1996" name="FEBS Lett.">
        <title>Divinyl ether synthase from garlic (Allium sativum L.) bulbs: sub-cellular localization and substrate regio-and stereospecificity.</title>
        <authorList>
            <person name="Grechkin A.N."/>
            <person name="Hamberg M."/>
        </authorList>
    </citation>
    <scope>FUNCTION</scope>
    <scope>CATALYTIC ACTIVITY</scope>
    <scope>PATHWAY</scope>
</reference>
<reference key="4">
    <citation type="journal article" date="1997" name="Eur. J. Biochem.">
        <title>On the mechanism of biosynthesis of divinyl ether oxylipins by enzyme from garlic bulbs.</title>
        <authorList>
            <person name="Grechkin A.N."/>
            <person name="Ilyasov A.V."/>
            <person name="Hamberg M."/>
        </authorList>
    </citation>
    <scope>FUNCTION</scope>
    <scope>CATALYTIC ACTIVITY</scope>
    <scope>PATHWAY</scope>
</reference>
<proteinExistence type="evidence at protein level"/>
<gene>
    <name evidence="6" type="primary">CYP74</name>
    <name evidence="6" type="synonym">DES</name>
</gene>
<accession>Q2WE96</accession>
<protein>
    <recommendedName>
        <fullName evidence="6">Divinyl ether synthase CYP74</fullName>
        <shortName evidence="6">AsDES</shortName>
    </recommendedName>
    <alternativeName>
        <fullName evidence="6">Colneleate synthase</fullName>
        <ecNumber evidence="2">4.2.1.121</ecNumber>
    </alternativeName>
    <alternativeName>
        <fullName evidence="8">Etheroleic acid synthase CYP74</fullName>
        <ecNumber evidence="2 3 4 5">4.2.1.183</ecNumber>
    </alternativeName>
</protein>
<organism>
    <name type="scientific">Allium sativum</name>
    <name type="common">Garlic</name>
    <dbReference type="NCBI Taxonomy" id="4682"/>
    <lineage>
        <taxon>Eukaryota</taxon>
        <taxon>Viridiplantae</taxon>
        <taxon>Streptophyta</taxon>
        <taxon>Embryophyta</taxon>
        <taxon>Tracheophyta</taxon>
        <taxon>Spermatophyta</taxon>
        <taxon>Magnoliopsida</taxon>
        <taxon>Liliopsida</taxon>
        <taxon>Asparagales</taxon>
        <taxon>Amaryllidaceae</taxon>
        <taxon>Allioideae</taxon>
        <taxon>Allieae</taxon>
        <taxon>Allium</taxon>
    </lineage>
</organism>
<evidence type="ECO:0000250" key="1">
    <source>
        <dbReference type="UniProtKB" id="Q96242"/>
    </source>
</evidence>
<evidence type="ECO:0000269" key="2">
    <source>
    </source>
</evidence>
<evidence type="ECO:0000269" key="3">
    <source>
    </source>
</evidence>
<evidence type="ECO:0000269" key="4">
    <source>
    </source>
</evidence>
<evidence type="ECO:0000269" key="5">
    <source>
    </source>
</evidence>
<evidence type="ECO:0000303" key="6">
    <source>
    </source>
</evidence>
<evidence type="ECO:0000305" key="7"/>
<evidence type="ECO:0000305" key="8">
    <source>
    </source>
</evidence>
<keyword id="KW-0275">Fatty acid biosynthesis</keyword>
<keyword id="KW-0276">Fatty acid metabolism</keyword>
<keyword id="KW-0349">Heme</keyword>
<keyword id="KW-0408">Iron</keyword>
<keyword id="KW-0444">Lipid biosynthesis</keyword>
<keyword id="KW-0443">Lipid metabolism</keyword>
<keyword id="KW-0456">Lyase</keyword>
<keyword id="KW-0479">Metal-binding</keyword>
<keyword id="KW-0925">Oxylipin biosynthesis</keyword>
<feature type="chain" id="PRO_0000462247" description="Divinyl ether synthase CYP74">
    <location>
        <begin position="1"/>
        <end position="472"/>
    </location>
</feature>
<feature type="binding site" description="axial binding residue" evidence="1">
    <location>
        <position position="425"/>
    </location>
    <ligand>
        <name>heme</name>
        <dbReference type="ChEBI" id="CHEBI:30413"/>
    </ligand>
    <ligandPart>
        <name>Fe</name>
        <dbReference type="ChEBI" id="CHEBI:18248"/>
    </ligandPart>
</feature>